<organism>
    <name type="scientific">Pan troglodytes</name>
    <name type="common">Chimpanzee</name>
    <dbReference type="NCBI Taxonomy" id="9598"/>
    <lineage>
        <taxon>Eukaryota</taxon>
        <taxon>Metazoa</taxon>
        <taxon>Chordata</taxon>
        <taxon>Craniata</taxon>
        <taxon>Vertebrata</taxon>
        <taxon>Euteleostomi</taxon>
        <taxon>Mammalia</taxon>
        <taxon>Eutheria</taxon>
        <taxon>Euarchontoglires</taxon>
        <taxon>Primates</taxon>
        <taxon>Haplorrhini</taxon>
        <taxon>Catarrhini</taxon>
        <taxon>Hominidae</taxon>
        <taxon>Pan</taxon>
    </lineage>
</organism>
<name>NMDE1_PANTR</name>
<evidence type="ECO:0000250" key="1"/>
<evidence type="ECO:0000250" key="2">
    <source>
        <dbReference type="UniProtKB" id="B7ZSK1"/>
    </source>
</evidence>
<evidence type="ECO:0000250" key="3">
    <source>
        <dbReference type="UniProtKB" id="P35436"/>
    </source>
</evidence>
<evidence type="ECO:0000250" key="4">
    <source>
        <dbReference type="UniProtKB" id="P35438"/>
    </source>
</evidence>
<evidence type="ECO:0000250" key="5">
    <source>
        <dbReference type="UniProtKB" id="Q00959"/>
    </source>
</evidence>
<evidence type="ECO:0000250" key="6">
    <source>
        <dbReference type="UniProtKB" id="Q12879"/>
    </source>
</evidence>
<evidence type="ECO:0000255" key="7"/>
<evidence type="ECO:0000256" key="8">
    <source>
        <dbReference type="SAM" id="MobiDB-lite"/>
    </source>
</evidence>
<evidence type="ECO:0000305" key="9"/>
<comment type="function">
    <text evidence="3 4 6">Component of N-methyl-D-aspartate (NMDA) receptors (NMDARs) that function as heterotetrameric, ligand-gated cation channels with high calcium permeability and voltage-dependent block by Mg(2+) (By similarity). NMDARs participate in synaptic plasticity for learning and memory formation by contributing to the slow phase of excitatory postsynaptic current, long-term synaptic potentiation, and learning (By similarity). Channel activation requires binding of the neurotransmitter L-glutamate to the GluN2 subunit, glycine or D-serine binding to the GluN1 subunit, plus membrane depolarization to eliminate channel inhibition by Mg(2+) (By similarity). NMDARs mediate simultaneously the potasium efflux and the influx of calcium and sodium (By similarity). Each GluN2 subunit confers differential attributes to channel properties, including activation, deactivation and desensitization kinetics, pH sensitivity, Ca2(+) permeability, and binding to allosteric modulators (By similarity). Participates in the synaptic plasticity regulation through activation by the L-glutamate releaseed by BEST1, into the synaptic cleft, upon F2R/PAR-1 activation in astrocyte (By similarity).</text>
</comment>
<comment type="catalytic activity">
    <reaction evidence="6">
        <text>Ca(2+)(in) = Ca(2+)(out)</text>
        <dbReference type="Rhea" id="RHEA:29671"/>
        <dbReference type="ChEBI" id="CHEBI:29108"/>
    </reaction>
</comment>
<comment type="catalytic activity">
    <reaction evidence="6">
        <text>Na(+)(in) = Na(+)(out)</text>
        <dbReference type="Rhea" id="RHEA:34963"/>
        <dbReference type="ChEBI" id="CHEBI:29101"/>
    </reaction>
</comment>
<comment type="catalytic activity">
    <reaction evidence="4">
        <text>K(+)(in) = K(+)(out)</text>
        <dbReference type="Rhea" id="RHEA:29463"/>
        <dbReference type="ChEBI" id="CHEBI:29103"/>
    </reaction>
</comment>
<comment type="subunit">
    <text evidence="3 5">Heterotetramer (By similarity). Forms heterotetrameric channels composed of two GluN1/zeta subunits (GRIN1), and two identical GluN2/epsilon subunits (GRIN2A, GRIN2B, GRIN2C or GRIN2D) or GluN3 subunits (GRIN3A or GRIN3B) (in vitro). Can also form heterotetrameric channels that contain at least two GluN1 subunits and at least two different GluN2 subunits (or a combination of one GluN2 and one GluN3 subunits) (in vitro) (By similarity). In vivo, the subunit composition may depend on the expression levels of the different subunits. Found in a complex with GRIN1, GRIN3A and PPP2CB (By similarity). Found in a complex with GRIN1 and GRIN3B (By similarity). Interacts with AIP1 (By similarity). Interacts with HIP1 and NETO1. Interacts with SNX27 (via PDZ domain); the interaction is required for recycling to the plasma membrane when endocytosed and prevent degradation in lysosomes (By similarity). Interacts with PDZ domains of PATJ and DLG4. Interacts with LRFN2 (By similarity). Interacts with RPH3A and DLG4; this ternary complex regulates NMDA receptor composition at postsynaptic membranes (By similarity). Interacts with SORCS2 (By similarity). Interacts with ARC; preventing ARC oligomerization (By similarity). Interacts (via the extreme C-terminus) with FRMPD2 (the second PDZ domain); the interaction is direct and is likely to promote NMDAR-mediated neural signal transmission (By similarity). GRIN2A binds FRMPD2 with lower affinity than GRIN2B (By similarity).</text>
</comment>
<comment type="subcellular location">
    <subcellularLocation>
        <location evidence="3">Cell projection</location>
        <location evidence="3">Dendritic spine</location>
    </subcellularLocation>
    <subcellularLocation>
        <location evidence="3">Cell membrane</location>
        <topology evidence="6">Multi-pass membrane protein</topology>
    </subcellularLocation>
    <subcellularLocation>
        <location evidence="3">Synapse</location>
    </subcellularLocation>
    <subcellularLocation>
        <location evidence="5">Postsynaptic cell membrane</location>
        <topology evidence="6">Multi-pass membrane protein</topology>
    </subcellularLocation>
    <subcellularLocation>
        <location evidence="3">Cytoplasmic vesicle membrane</location>
    </subcellularLocation>
    <text evidence="3">Expression at the dendrite cell membrane and at synapses is regulated by SORCS2 and the retromer complex.</text>
</comment>
<comment type="domain">
    <text evidence="5">Contains an N-terminal domain, a ligand-binding domain and a transmembrane domain. Agonist binding to the extracellular ligand-binding domains triggers channel gating.</text>
</comment>
<comment type="domain">
    <text evidence="2">A hydrophobic region that gives rise to the prediction of a transmembrane span does not cross the membrane, but is part of a discontinuously helical region that dips into the membrane and is probably part of the pore and of the selectivity filter.</text>
</comment>
<comment type="similarity">
    <text evidence="9">Belongs to the glutamate-gated ion channel (TC 1.A.10.1) family. NR2A/GRIN2A subfamily.</text>
</comment>
<reference key="1">
    <citation type="journal article" date="2004" name="Cell">
        <title>Accelerated evolution of nervous system genes in the origin of Homo sapiens.</title>
        <authorList>
            <person name="Dorus S."/>
            <person name="Vallender E.J."/>
            <person name="Evans P.D."/>
            <person name="Anderson J.R."/>
            <person name="Gilbert S.L."/>
            <person name="Mahowald M."/>
            <person name="Wyckoff G.J."/>
            <person name="Malcom C.M."/>
            <person name="Lahn B.T."/>
        </authorList>
    </citation>
    <scope>NUCLEOTIDE SEQUENCE [MRNA]</scope>
</reference>
<keyword id="KW-0106">Calcium</keyword>
<keyword id="KW-1003">Cell membrane</keyword>
<keyword id="KW-0966">Cell projection</keyword>
<keyword id="KW-0968">Cytoplasmic vesicle</keyword>
<keyword id="KW-1015">Disulfide bond</keyword>
<keyword id="KW-0325">Glycoprotein</keyword>
<keyword id="KW-0407">Ion channel</keyword>
<keyword id="KW-0406">Ion transport</keyword>
<keyword id="KW-1071">Ligand-gated ion channel</keyword>
<keyword id="KW-0460">Magnesium</keyword>
<keyword id="KW-0472">Membrane</keyword>
<keyword id="KW-0479">Metal-binding</keyword>
<keyword id="KW-0597">Phosphoprotein</keyword>
<keyword id="KW-0628">Postsynaptic cell membrane</keyword>
<keyword id="KW-0675">Receptor</keyword>
<keyword id="KW-1185">Reference proteome</keyword>
<keyword id="KW-0732">Signal</keyword>
<keyword id="KW-0770">Synapse</keyword>
<keyword id="KW-0812">Transmembrane</keyword>
<keyword id="KW-1133">Transmembrane helix</keyword>
<keyword id="KW-0813">Transport</keyword>
<keyword id="KW-0862">Zinc</keyword>
<accession>Q5IS45</accession>
<sequence>MGRVGYWTLLVLPALLVWRGPAPSAAAEKGPPALNIAVMLGHSHDVTERELRTLWGPEQAAGLPLDVNVVALLMNRTDPKSLITHVCDLMSGARIHGLVFGDDTDQEAVAQMLDFISSHTFVPILGIHGGASMIMNDKDPTSTFFQFGASIQQQATVMLKIMQDYDWHVFSLVTTIFPGYREFISFVKTTVDNSFVGWDMQNVITLDTSFEDAKTQVQLKKIHSSVILLYCSKDEAVLILSEARSLGLTGYDFFWIVPSLVSGNTELIPKEFPSGLISVSYDDWDYSLEARVRDGIGILTTAASSMLEKFSYIPEAKASCYGQMERPEVPMHTLHPFMVNVTWDGKDLSFTEEGYQVHPRLVVIVLNKDREWEKVGKWENHTLSLRHAVWPRYKSFSDCEPDDNHLSIVTLEEAPFVIVEDIDPLTETCVRNTVPCRKFVKINNSTNEGMNVKKCCKGFCIDILKKLSRTVKFTYDLYLVTNGKHGKKVNNVWNGMIGEVVYQRAVMAVGSLTINEERSEVVDFSVPFVETGISVMVSRSNGTVSPSAFLEPFSASVWVMMFVMLLIVSAIAVFVFEYFSPVGYNRNLAKGKAPHGPSFTIGKAIWLLWGLVFNNSVPVQNPKGTTSKIMVSVWAFFAVIFLASYTANLAAFMIQEEFVDQVTGLSDKKFQRPHDYSPPFRFGTVPNGSTERNIRNNYPYMHQYMTKFNQKGVEDALVSLKTGKLDAFIYDAAVLNYKAGRDEGCKLVTIGSGYIFATTGYGIALQKGSPWKRQIDLALLQFVGDGEMEELETLWLTGICHNEKNEVMSSQLDIDNMAGVFYMLAAAMALSLITFIWEHLFYWKLRFCFTGVCSDRPGLLFSISRGIYSCIHGVHIEEKKKSPDFNLTGSQSNMLKLLRSAKNISNMSNMNSSRMDSPKRAADFIQRGSLIMDMVSDKGNLMYSDNRSFQGKESIFGDNMNELQTFVANRQKDNLNNYVFQGQHPLTLNESNPNTVEVAVSTESKVNSRPRQLWKKSVDSIRQDSLSQNPVSQRDEATAENRTHSLKSPRYLPEEMAHSDISETSNRATCHREPDNSKNPKTKDNFKRSVASKYPKDCSEVERTYLKTKSSSPRDKIYTIDGEKEPGFHLDPPQFVENVTLPENVDFPDPYQDPSENLRKGDSTLPMNRNPLQNEEGLSNNDQYKLYSKHFTLKDKGSPHSETSERYRQNSTHCRSCLSNLPTYSGHFTMRSPFKCDACLRMGNLYDIDEDQMLQETGNPATGEQVYQQDWAQNNALQLQKNKLRISRQHSYDNIVDKPRELDLSRPSRSISLKDRERLLEGNFYGSLFSVPSSKLSGKKSSLFPQGLEDSKRSKSLLPDHTSDNPFLHSHRDDQRLVIGRCPSDPYKHSLPSQAVNDSYLRSSLRSTASYCSRDSRGHNDVYISEHVMPYAANKNNMYSTPRVLNSCSNRRVYKKMPSIESDV</sequence>
<gene>
    <name evidence="6" type="primary">GRIN2A</name>
</gene>
<feature type="signal peptide" evidence="7">
    <location>
        <begin position="1"/>
        <end position="22"/>
    </location>
</feature>
<feature type="chain" id="PRO_0000011575" description="Glutamate receptor ionotropic, NMDA 2A">
    <location>
        <begin position="23"/>
        <end position="1464"/>
    </location>
</feature>
<feature type="topological domain" description="Extracellular" evidence="9">
    <location>
        <begin position="23"/>
        <end position="556"/>
    </location>
</feature>
<feature type="transmembrane region" description="Helical" evidence="6">
    <location>
        <begin position="557"/>
        <end position="576"/>
    </location>
</feature>
<feature type="topological domain" description="Cytoplasmic" evidence="9">
    <location>
        <begin position="577"/>
        <end position="600"/>
    </location>
</feature>
<feature type="intramembrane region" description="Discontinuously helical" evidence="6">
    <location>
        <begin position="601"/>
        <end position="615"/>
    </location>
</feature>
<feature type="topological domain" description="Cytoplasmic" evidence="9">
    <location>
        <begin position="616"/>
        <end position="625"/>
    </location>
</feature>
<feature type="transmembrane region" description="Helical" evidence="6">
    <location>
        <begin position="626"/>
        <end position="646"/>
    </location>
</feature>
<feature type="topological domain" description="Extracellular" evidence="9">
    <location>
        <begin position="647"/>
        <end position="814"/>
    </location>
</feature>
<feature type="transmembrane region" description="Helical" evidence="6">
    <location>
        <begin position="815"/>
        <end position="835"/>
    </location>
</feature>
<feature type="topological domain" description="Cytoplasmic" evidence="9">
    <location>
        <begin position="836"/>
        <end position="1464"/>
    </location>
</feature>
<feature type="region of interest" description="Pore-forming" evidence="2">
    <location>
        <begin position="599"/>
        <end position="620"/>
    </location>
</feature>
<feature type="region of interest" description="Disordered" evidence="8">
    <location>
        <begin position="1001"/>
        <end position="1088"/>
    </location>
</feature>
<feature type="region of interest" description="Disordered" evidence="8">
    <location>
        <begin position="1148"/>
        <end position="1180"/>
    </location>
</feature>
<feature type="region of interest" description="Disordered" evidence="8">
    <location>
        <begin position="1335"/>
        <end position="1372"/>
    </location>
</feature>
<feature type="short sequence motif" description="PDZ-binding" evidence="9">
    <location>
        <begin position="1462"/>
        <end position="1464"/>
    </location>
</feature>
<feature type="compositionally biased region" description="Polar residues" evidence="8">
    <location>
        <begin position="1001"/>
        <end position="1010"/>
    </location>
</feature>
<feature type="compositionally biased region" description="Polar residues" evidence="8">
    <location>
        <begin position="1023"/>
        <end position="1032"/>
    </location>
</feature>
<feature type="compositionally biased region" description="Basic and acidic residues" evidence="8">
    <location>
        <begin position="1033"/>
        <end position="1043"/>
    </location>
</feature>
<feature type="compositionally biased region" description="Basic and acidic residues" evidence="8">
    <location>
        <begin position="1052"/>
        <end position="1061"/>
    </location>
</feature>
<feature type="compositionally biased region" description="Basic and acidic residues" evidence="8">
    <location>
        <begin position="1070"/>
        <end position="1087"/>
    </location>
</feature>
<feature type="compositionally biased region" description="Polar residues" evidence="8">
    <location>
        <begin position="1165"/>
        <end position="1180"/>
    </location>
</feature>
<feature type="binding site" evidence="5">
    <location>
        <position position="44"/>
    </location>
    <ligand>
        <name>Zn(2+)</name>
        <dbReference type="ChEBI" id="CHEBI:29105"/>
        <label>1</label>
        <note>inhibitor</note>
    </ligand>
</feature>
<feature type="binding site" evidence="5">
    <location>
        <position position="128"/>
    </location>
    <ligand>
        <name>Zn(2+)</name>
        <dbReference type="ChEBI" id="CHEBI:29105"/>
        <label>1</label>
        <note>inhibitor</note>
    </ligand>
</feature>
<feature type="binding site" evidence="5">
    <location>
        <position position="266"/>
    </location>
    <ligand>
        <name>Zn(2+)</name>
        <dbReference type="ChEBI" id="CHEBI:29105"/>
        <label>1</label>
        <note>inhibitor</note>
    </ligand>
</feature>
<feature type="binding site" evidence="5">
    <location>
        <position position="282"/>
    </location>
    <ligand>
        <name>Zn(2+)</name>
        <dbReference type="ChEBI" id="CHEBI:29105"/>
        <label>1</label>
        <note>inhibitor</note>
    </ligand>
</feature>
<feature type="binding site" evidence="5">
    <location>
        <position position="511"/>
    </location>
    <ligand>
        <name>L-glutamate</name>
        <dbReference type="ChEBI" id="CHEBI:29985"/>
    </ligand>
</feature>
<feature type="binding site" evidence="5">
    <location>
        <position position="513"/>
    </location>
    <ligand>
        <name>L-glutamate</name>
        <dbReference type="ChEBI" id="CHEBI:29985"/>
    </ligand>
</feature>
<feature type="binding site" evidence="5">
    <location>
        <position position="518"/>
    </location>
    <ligand>
        <name>L-glutamate</name>
        <dbReference type="ChEBI" id="CHEBI:29985"/>
    </ligand>
</feature>
<feature type="binding site" evidence="5">
    <location>
        <position position="689"/>
    </location>
    <ligand>
        <name>L-glutamate</name>
        <dbReference type="ChEBI" id="CHEBI:29985"/>
    </ligand>
</feature>
<feature type="binding site" evidence="5">
    <location>
        <position position="690"/>
    </location>
    <ligand>
        <name>L-glutamate</name>
        <dbReference type="ChEBI" id="CHEBI:29985"/>
    </ligand>
</feature>
<feature type="binding site" evidence="5">
    <location>
        <position position="731"/>
    </location>
    <ligand>
        <name>L-glutamate</name>
        <dbReference type="ChEBI" id="CHEBI:29985"/>
    </ligand>
</feature>
<feature type="site" description="Functional determinant of NMDA receptors" evidence="1">
    <location>
        <position position="614"/>
    </location>
</feature>
<feature type="modified residue" description="Phosphoserine" evidence="3">
    <location>
        <position position="882"/>
    </location>
</feature>
<feature type="modified residue" description="Phosphoserine" evidence="3">
    <location>
        <position position="890"/>
    </location>
</feature>
<feature type="modified residue" description="Phosphoserine" evidence="3">
    <location>
        <position position="929"/>
    </location>
</feature>
<feature type="modified residue" description="Phosphoserine" evidence="5">
    <location>
        <position position="1025"/>
    </location>
</feature>
<feature type="modified residue" description="Phosphoserine" evidence="3">
    <location>
        <position position="1059"/>
    </location>
</feature>
<feature type="modified residue" description="Phosphoserine" evidence="5">
    <location>
        <position position="1062"/>
    </location>
</feature>
<feature type="modified residue" description="Phosphoserine" evidence="5">
    <location>
        <position position="1198"/>
    </location>
</feature>
<feature type="modified residue" description="Phosphoserine" evidence="5">
    <location>
        <position position="1291"/>
    </location>
</feature>
<feature type="glycosylation site" description="N-linked (GlcNAc...) asparagine" evidence="7">
    <location>
        <position position="75"/>
    </location>
</feature>
<feature type="glycosylation site" description="N-linked (GlcNAc...) asparagine" evidence="7">
    <location>
        <position position="340"/>
    </location>
</feature>
<feature type="glycosylation site" description="N-linked (GlcNAc...) asparagine" evidence="7">
    <location>
        <position position="380"/>
    </location>
</feature>
<feature type="glycosylation site" description="N-linked (GlcNAc...) asparagine" evidence="7">
    <location>
        <position position="443"/>
    </location>
</feature>
<feature type="glycosylation site" description="N-linked (GlcNAc...) asparagine" evidence="7">
    <location>
        <position position="444"/>
    </location>
</feature>
<feature type="glycosylation site" description="N-linked (GlcNAc...) asparagine" evidence="7">
    <location>
        <position position="541"/>
    </location>
</feature>
<feature type="glycosylation site" description="N-linked (GlcNAc...) asparagine" evidence="7">
    <location>
        <position position="687"/>
    </location>
</feature>
<feature type="disulfide bond" evidence="5">
    <location>
        <begin position="87"/>
        <end position="320"/>
    </location>
</feature>
<feature type="disulfide bond" evidence="5">
    <location>
        <begin position="429"/>
        <end position="455"/>
    </location>
</feature>
<feature type="disulfide bond" evidence="5">
    <location>
        <begin position="436"/>
        <end position="456"/>
    </location>
</feature>
<feature type="disulfide bond" evidence="5">
    <location>
        <begin position="745"/>
        <end position="800"/>
    </location>
</feature>
<proteinExistence type="evidence at transcript level"/>
<dbReference type="EMBL" id="AY665283">
    <property type="protein sequence ID" value="AAV74321.1"/>
    <property type="molecule type" value="mRNA"/>
</dbReference>
<dbReference type="RefSeq" id="NP_001029361.1">
    <property type="nucleotide sequence ID" value="NM_001034189.1"/>
</dbReference>
<dbReference type="SMR" id="Q5IS45"/>
<dbReference type="FunCoup" id="Q5IS45">
    <property type="interactions" value="1211"/>
</dbReference>
<dbReference type="STRING" id="9598.ENSPTRP00000055315"/>
<dbReference type="GlyCosmos" id="Q5IS45">
    <property type="glycosylation" value="7 sites, No reported glycans"/>
</dbReference>
<dbReference type="PaxDb" id="9598-ENSPTRP00000013242"/>
<dbReference type="GeneID" id="454396"/>
<dbReference type="CTD" id="2903"/>
<dbReference type="eggNOG" id="KOG1053">
    <property type="taxonomic scope" value="Eukaryota"/>
</dbReference>
<dbReference type="InParanoid" id="Q5IS45"/>
<dbReference type="Proteomes" id="UP000002277">
    <property type="component" value="Unplaced"/>
</dbReference>
<dbReference type="GO" id="GO:0030659">
    <property type="term" value="C:cytoplasmic vesicle membrane"/>
    <property type="evidence" value="ECO:0007669"/>
    <property type="project" value="UniProtKB-SubCell"/>
</dbReference>
<dbReference type="GO" id="GO:0043197">
    <property type="term" value="C:dendritic spine"/>
    <property type="evidence" value="ECO:0007669"/>
    <property type="project" value="UniProtKB-SubCell"/>
</dbReference>
<dbReference type="GO" id="GO:0017146">
    <property type="term" value="C:NMDA selective glutamate receptor complex"/>
    <property type="evidence" value="ECO:0000250"/>
    <property type="project" value="UniProtKB"/>
</dbReference>
<dbReference type="GO" id="GO:0005886">
    <property type="term" value="C:plasma membrane"/>
    <property type="evidence" value="ECO:0000250"/>
    <property type="project" value="UniProtKB"/>
</dbReference>
<dbReference type="GO" id="GO:0014069">
    <property type="term" value="C:postsynaptic density"/>
    <property type="evidence" value="ECO:0000250"/>
    <property type="project" value="UniProtKB"/>
</dbReference>
<dbReference type="GO" id="GO:0098839">
    <property type="term" value="C:postsynaptic density membrane"/>
    <property type="evidence" value="ECO:0000318"/>
    <property type="project" value="GO_Central"/>
</dbReference>
<dbReference type="GO" id="GO:0045211">
    <property type="term" value="C:postsynaptic membrane"/>
    <property type="evidence" value="ECO:0000250"/>
    <property type="project" value="UniProtKB"/>
</dbReference>
<dbReference type="GO" id="GO:0022849">
    <property type="term" value="F:glutamate-gated calcium ion channel activity"/>
    <property type="evidence" value="ECO:0000250"/>
    <property type="project" value="UniProtKB"/>
</dbReference>
<dbReference type="GO" id="GO:0004972">
    <property type="term" value="F:NMDA glutamate receptor activity"/>
    <property type="evidence" value="ECO:0000250"/>
    <property type="project" value="UniProtKB"/>
</dbReference>
<dbReference type="GO" id="GO:1904315">
    <property type="term" value="F:transmitter-gated monoatomic ion channel activity involved in regulation of postsynaptic membrane potential"/>
    <property type="evidence" value="ECO:0000318"/>
    <property type="project" value="GO_Central"/>
</dbReference>
<dbReference type="GO" id="GO:0008270">
    <property type="term" value="F:zinc ion binding"/>
    <property type="evidence" value="ECO:0000250"/>
    <property type="project" value="UniProtKB"/>
</dbReference>
<dbReference type="GO" id="GO:0097553">
    <property type="term" value="P:calcium ion transmembrane import into cytosol"/>
    <property type="evidence" value="ECO:0000250"/>
    <property type="project" value="UniProtKB"/>
</dbReference>
<dbReference type="GO" id="GO:0060079">
    <property type="term" value="P:excitatory postsynaptic potential"/>
    <property type="evidence" value="ECO:0000318"/>
    <property type="project" value="GO_Central"/>
</dbReference>
<dbReference type="GO" id="GO:0007215">
    <property type="term" value="P:glutamate receptor signaling pathway"/>
    <property type="evidence" value="ECO:0000250"/>
    <property type="project" value="UniProtKB"/>
</dbReference>
<dbReference type="GO" id="GO:0060291">
    <property type="term" value="P:long-term synaptic potentiation"/>
    <property type="evidence" value="ECO:0000318"/>
    <property type="project" value="GO_Central"/>
</dbReference>
<dbReference type="GO" id="GO:0048167">
    <property type="term" value="P:regulation of synaptic plasticity"/>
    <property type="evidence" value="ECO:0000250"/>
    <property type="project" value="UniProtKB"/>
</dbReference>
<dbReference type="GO" id="GO:0035249">
    <property type="term" value="P:synaptic transmission, glutamatergic"/>
    <property type="evidence" value="ECO:0000318"/>
    <property type="project" value="GO_Central"/>
</dbReference>
<dbReference type="CDD" id="cd06378">
    <property type="entry name" value="PBP1_iGluR_NMDA_NR2"/>
    <property type="match status" value="1"/>
</dbReference>
<dbReference type="CDD" id="cd13718">
    <property type="entry name" value="PBP2_iGluR_NMDA_Nr2"/>
    <property type="match status" value="1"/>
</dbReference>
<dbReference type="FunFam" id="3.40.190.10:FF:000593">
    <property type="entry name" value="Glutamate ionotropic receptor NMDA type subunit 1"/>
    <property type="match status" value="1"/>
</dbReference>
<dbReference type="FunFam" id="3.40.50.2300:FF:000344">
    <property type="entry name" value="Glutamate ionotropic receptor NMDA type subunit 2A"/>
    <property type="match status" value="1"/>
</dbReference>
<dbReference type="FunFam" id="3.40.50.2300:FF:000020">
    <property type="entry name" value="Glutamate receptor ionotropic, NMDA 2B, putative"/>
    <property type="match status" value="1"/>
</dbReference>
<dbReference type="FunFam" id="3.40.190.10:FF:000007">
    <property type="entry name" value="Putative glutamate receptor ionotropic NMDA 2B"/>
    <property type="match status" value="1"/>
</dbReference>
<dbReference type="FunFam" id="3.40.190.10:FF:000009">
    <property type="entry name" value="Putative glutamate receptor ionotropic NMDA 2B"/>
    <property type="match status" value="1"/>
</dbReference>
<dbReference type="Gene3D" id="3.40.50.2300">
    <property type="match status" value="2"/>
</dbReference>
<dbReference type="Gene3D" id="3.40.190.10">
    <property type="entry name" value="Periplasmic binding protein-like II"/>
    <property type="match status" value="2"/>
</dbReference>
<dbReference type="InterPro" id="IPR001828">
    <property type="entry name" value="ANF_lig-bd_rcpt"/>
</dbReference>
<dbReference type="InterPro" id="IPR019594">
    <property type="entry name" value="Glu/Gly-bd"/>
</dbReference>
<dbReference type="InterPro" id="IPR001508">
    <property type="entry name" value="Iono_Glu_rcpt_met"/>
</dbReference>
<dbReference type="InterPro" id="IPR015683">
    <property type="entry name" value="Ionotropic_Glu_rcpt"/>
</dbReference>
<dbReference type="InterPro" id="IPR001320">
    <property type="entry name" value="Iontro_rcpt_C"/>
</dbReference>
<dbReference type="InterPro" id="IPR018884">
    <property type="entry name" value="NMDAR2_C"/>
</dbReference>
<dbReference type="InterPro" id="IPR028082">
    <property type="entry name" value="Peripla_BP_I"/>
</dbReference>
<dbReference type="PANTHER" id="PTHR18966">
    <property type="entry name" value="IONOTROPIC GLUTAMATE RECEPTOR"/>
    <property type="match status" value="1"/>
</dbReference>
<dbReference type="Pfam" id="PF01094">
    <property type="entry name" value="ANF_receptor"/>
    <property type="match status" value="1"/>
</dbReference>
<dbReference type="Pfam" id="PF00060">
    <property type="entry name" value="Lig_chan"/>
    <property type="match status" value="1"/>
</dbReference>
<dbReference type="Pfam" id="PF10613">
    <property type="entry name" value="Lig_chan-Glu_bd"/>
    <property type="match status" value="1"/>
</dbReference>
<dbReference type="Pfam" id="PF10565">
    <property type="entry name" value="NMDAR2_C"/>
    <property type="match status" value="1"/>
</dbReference>
<dbReference type="PRINTS" id="PR00177">
    <property type="entry name" value="NMDARECEPTOR"/>
</dbReference>
<dbReference type="SMART" id="SM00918">
    <property type="entry name" value="Lig_chan-Glu_bd"/>
    <property type="match status" value="1"/>
</dbReference>
<dbReference type="SMART" id="SM00079">
    <property type="entry name" value="PBPe"/>
    <property type="match status" value="1"/>
</dbReference>
<dbReference type="SUPFAM" id="SSF53822">
    <property type="entry name" value="Periplasmic binding protein-like I"/>
    <property type="match status" value="1"/>
</dbReference>
<dbReference type="SUPFAM" id="SSF53850">
    <property type="entry name" value="Periplasmic binding protein-like II"/>
    <property type="match status" value="1"/>
</dbReference>
<protein>
    <recommendedName>
        <fullName evidence="6">Glutamate receptor ionotropic, NMDA 2A</fullName>
        <shortName>GluN2A</shortName>
    </recommendedName>
    <alternativeName>
        <fullName>Glutamate [NMDA] receptor subunit epsilon-1</fullName>
    </alternativeName>
    <alternativeName>
        <fullName>N-methyl D-aspartate receptor subtype 2A</fullName>
        <shortName>NMDAR2A</shortName>
        <shortName>NR2A</shortName>
    </alternativeName>
</protein>